<proteinExistence type="inferred from homology"/>
<gene>
    <name evidence="1" type="primary">lipA</name>
    <name type="ordered locus">RPR_03265</name>
</gene>
<name>LIPA_RICPU</name>
<sequence length="296" mass="33509">MANLNKRPDWIKVKAPNSTEYYNTKDLIKNLRLNTVCEEAACPNIGECWSKKHTTVMILGSVCTRACRFCNVKTGRPDLLDPYEPQRLAEAVQKLNLKHVVITSVDRDDLEDGGASHFAECISEIRKSSPNTTIEILTPDFLRKEGAAEIIANAKPDVFNHNVETVPSLYKTIRPGARYYNSLSLLHNIKKLSPEIFTKSGMMVGLGEEINEVVQVIDDLREAKVDFLTIGQYLQPTKNHAEVAKYVTPEEFKYLERVAKTKGFLMVSANPLTRSSYHADEDFQKLKENYQQKLVS</sequence>
<comment type="function">
    <text evidence="1">Catalyzes the radical-mediated insertion of two sulfur atoms into the C-6 and C-8 positions of the octanoyl moiety bound to the lipoyl domains of lipoate-dependent enzymes, thereby converting the octanoylated domains into lipoylated derivatives.</text>
</comment>
<comment type="catalytic activity">
    <reaction evidence="1">
        <text>[[Fe-S] cluster scaffold protein carrying a second [4Fe-4S](2+) cluster] + N(6)-octanoyl-L-lysyl-[protein] + 2 oxidized [2Fe-2S]-[ferredoxin] + 2 S-adenosyl-L-methionine + 4 H(+) = [[Fe-S] cluster scaffold protein] + N(6)-[(R)-dihydrolipoyl]-L-lysyl-[protein] + 4 Fe(3+) + 2 hydrogen sulfide + 2 5'-deoxyadenosine + 2 L-methionine + 2 reduced [2Fe-2S]-[ferredoxin]</text>
        <dbReference type="Rhea" id="RHEA:16585"/>
        <dbReference type="Rhea" id="RHEA-COMP:9928"/>
        <dbReference type="Rhea" id="RHEA-COMP:10000"/>
        <dbReference type="Rhea" id="RHEA-COMP:10001"/>
        <dbReference type="Rhea" id="RHEA-COMP:10475"/>
        <dbReference type="Rhea" id="RHEA-COMP:14568"/>
        <dbReference type="Rhea" id="RHEA-COMP:14569"/>
        <dbReference type="ChEBI" id="CHEBI:15378"/>
        <dbReference type="ChEBI" id="CHEBI:17319"/>
        <dbReference type="ChEBI" id="CHEBI:29034"/>
        <dbReference type="ChEBI" id="CHEBI:29919"/>
        <dbReference type="ChEBI" id="CHEBI:33722"/>
        <dbReference type="ChEBI" id="CHEBI:33737"/>
        <dbReference type="ChEBI" id="CHEBI:33738"/>
        <dbReference type="ChEBI" id="CHEBI:57844"/>
        <dbReference type="ChEBI" id="CHEBI:59789"/>
        <dbReference type="ChEBI" id="CHEBI:78809"/>
        <dbReference type="ChEBI" id="CHEBI:83100"/>
        <dbReference type="EC" id="2.8.1.8"/>
    </reaction>
</comment>
<comment type="cofactor">
    <cofactor evidence="1">
        <name>[4Fe-4S] cluster</name>
        <dbReference type="ChEBI" id="CHEBI:49883"/>
    </cofactor>
    <text evidence="1">Binds 2 [4Fe-4S] clusters per subunit. One cluster is coordinated with 3 cysteines and an exchangeable S-adenosyl-L-methionine.</text>
</comment>
<comment type="pathway">
    <text evidence="1">Protein modification; protein lipoylation via endogenous pathway; protein N(6)-(lipoyl)lysine from octanoyl-[acyl-carrier-protein]: step 2/2.</text>
</comment>
<comment type="subcellular location">
    <subcellularLocation>
        <location evidence="1">Cytoplasm</location>
    </subcellularLocation>
</comment>
<comment type="similarity">
    <text evidence="1">Belongs to the radical SAM superfamily. Lipoyl synthase family.</text>
</comment>
<evidence type="ECO:0000255" key="1">
    <source>
        <dbReference type="HAMAP-Rule" id="MF_00206"/>
    </source>
</evidence>
<evidence type="ECO:0000255" key="2">
    <source>
        <dbReference type="PROSITE-ProRule" id="PRU01266"/>
    </source>
</evidence>
<organism>
    <name type="scientific">Rickettsia peacockii (strain Rustic)</name>
    <dbReference type="NCBI Taxonomy" id="562019"/>
    <lineage>
        <taxon>Bacteria</taxon>
        <taxon>Pseudomonadati</taxon>
        <taxon>Pseudomonadota</taxon>
        <taxon>Alphaproteobacteria</taxon>
        <taxon>Rickettsiales</taxon>
        <taxon>Rickettsiaceae</taxon>
        <taxon>Rickettsieae</taxon>
        <taxon>Rickettsia</taxon>
        <taxon>spotted fever group</taxon>
    </lineage>
</organism>
<reference key="1">
    <citation type="journal article" date="2009" name="PLoS ONE">
        <title>Genome sequence of the endosymbiont Rickettsia peacockii and comparison with virulent Rickettsia rickettsii: identification of virulence factors.</title>
        <authorList>
            <person name="Felsheim R.F."/>
            <person name="Kurtti T.J."/>
            <person name="Munderloh U.G."/>
        </authorList>
    </citation>
    <scope>NUCLEOTIDE SEQUENCE [LARGE SCALE GENOMIC DNA]</scope>
    <source>
        <strain>Rustic</strain>
    </source>
</reference>
<accession>C4K1I0</accession>
<protein>
    <recommendedName>
        <fullName evidence="1">Lipoyl synthase</fullName>
        <ecNumber evidence="1">2.8.1.8</ecNumber>
    </recommendedName>
    <alternativeName>
        <fullName evidence="1">Lip-syn</fullName>
        <shortName evidence="1">LS</shortName>
    </alternativeName>
    <alternativeName>
        <fullName evidence="1">Lipoate synthase</fullName>
    </alternativeName>
    <alternativeName>
        <fullName evidence="1">Lipoic acid synthase</fullName>
    </alternativeName>
    <alternativeName>
        <fullName evidence="1">Sulfur insertion protein LipA</fullName>
    </alternativeName>
</protein>
<dbReference type="EC" id="2.8.1.8" evidence="1"/>
<dbReference type="EMBL" id="CP001227">
    <property type="protein sequence ID" value="ACR47431.1"/>
    <property type="molecule type" value="Genomic_DNA"/>
</dbReference>
<dbReference type="RefSeq" id="WP_012736675.1">
    <property type="nucleotide sequence ID" value="NC_012730.1"/>
</dbReference>
<dbReference type="SMR" id="C4K1I0"/>
<dbReference type="KEGG" id="rpk:RPR_03265"/>
<dbReference type="HOGENOM" id="CLU_033144_2_1_5"/>
<dbReference type="UniPathway" id="UPA00538">
    <property type="reaction ID" value="UER00593"/>
</dbReference>
<dbReference type="Proteomes" id="UP000005015">
    <property type="component" value="Chromosome"/>
</dbReference>
<dbReference type="GO" id="GO:0005737">
    <property type="term" value="C:cytoplasm"/>
    <property type="evidence" value="ECO:0007669"/>
    <property type="project" value="UniProtKB-SubCell"/>
</dbReference>
<dbReference type="GO" id="GO:0051539">
    <property type="term" value="F:4 iron, 4 sulfur cluster binding"/>
    <property type="evidence" value="ECO:0007669"/>
    <property type="project" value="UniProtKB-UniRule"/>
</dbReference>
<dbReference type="GO" id="GO:0016992">
    <property type="term" value="F:lipoate synthase activity"/>
    <property type="evidence" value="ECO:0007669"/>
    <property type="project" value="UniProtKB-UniRule"/>
</dbReference>
<dbReference type="GO" id="GO:0046872">
    <property type="term" value="F:metal ion binding"/>
    <property type="evidence" value="ECO:0007669"/>
    <property type="project" value="UniProtKB-KW"/>
</dbReference>
<dbReference type="CDD" id="cd01335">
    <property type="entry name" value="Radical_SAM"/>
    <property type="match status" value="1"/>
</dbReference>
<dbReference type="FunFam" id="3.20.20.70:FF:000040">
    <property type="entry name" value="Lipoyl synthase"/>
    <property type="match status" value="1"/>
</dbReference>
<dbReference type="Gene3D" id="3.20.20.70">
    <property type="entry name" value="Aldolase class I"/>
    <property type="match status" value="1"/>
</dbReference>
<dbReference type="HAMAP" id="MF_00206">
    <property type="entry name" value="Lipoyl_synth"/>
    <property type="match status" value="1"/>
</dbReference>
<dbReference type="InterPro" id="IPR013785">
    <property type="entry name" value="Aldolase_TIM"/>
</dbReference>
<dbReference type="InterPro" id="IPR006638">
    <property type="entry name" value="Elp3/MiaA/NifB-like_rSAM"/>
</dbReference>
<dbReference type="InterPro" id="IPR031691">
    <property type="entry name" value="LIAS_N"/>
</dbReference>
<dbReference type="InterPro" id="IPR003698">
    <property type="entry name" value="Lipoyl_synth"/>
</dbReference>
<dbReference type="InterPro" id="IPR007197">
    <property type="entry name" value="rSAM"/>
</dbReference>
<dbReference type="NCBIfam" id="TIGR00510">
    <property type="entry name" value="lipA"/>
    <property type="match status" value="1"/>
</dbReference>
<dbReference type="NCBIfam" id="NF004019">
    <property type="entry name" value="PRK05481.1"/>
    <property type="match status" value="1"/>
</dbReference>
<dbReference type="NCBIfam" id="NF009544">
    <property type="entry name" value="PRK12928.1"/>
    <property type="match status" value="1"/>
</dbReference>
<dbReference type="PANTHER" id="PTHR10949">
    <property type="entry name" value="LIPOYL SYNTHASE"/>
    <property type="match status" value="1"/>
</dbReference>
<dbReference type="PANTHER" id="PTHR10949:SF0">
    <property type="entry name" value="LIPOYL SYNTHASE, MITOCHONDRIAL"/>
    <property type="match status" value="1"/>
</dbReference>
<dbReference type="Pfam" id="PF16881">
    <property type="entry name" value="LIAS_N"/>
    <property type="match status" value="1"/>
</dbReference>
<dbReference type="Pfam" id="PF04055">
    <property type="entry name" value="Radical_SAM"/>
    <property type="match status" value="1"/>
</dbReference>
<dbReference type="PIRSF" id="PIRSF005963">
    <property type="entry name" value="Lipoyl_synth"/>
    <property type="match status" value="1"/>
</dbReference>
<dbReference type="SFLD" id="SFLDF00271">
    <property type="entry name" value="lipoyl_synthase"/>
    <property type="match status" value="1"/>
</dbReference>
<dbReference type="SFLD" id="SFLDS00029">
    <property type="entry name" value="Radical_SAM"/>
    <property type="match status" value="1"/>
</dbReference>
<dbReference type="SMART" id="SM00729">
    <property type="entry name" value="Elp3"/>
    <property type="match status" value="1"/>
</dbReference>
<dbReference type="SUPFAM" id="SSF102114">
    <property type="entry name" value="Radical SAM enzymes"/>
    <property type="match status" value="1"/>
</dbReference>
<dbReference type="PROSITE" id="PS51918">
    <property type="entry name" value="RADICAL_SAM"/>
    <property type="match status" value="1"/>
</dbReference>
<feature type="chain" id="PRO_1000204157" description="Lipoyl synthase">
    <location>
        <begin position="1"/>
        <end position="296"/>
    </location>
</feature>
<feature type="domain" description="Radical SAM core" evidence="2">
    <location>
        <begin position="49"/>
        <end position="265"/>
    </location>
</feature>
<feature type="binding site" evidence="1">
    <location>
        <position position="37"/>
    </location>
    <ligand>
        <name>[4Fe-4S] cluster</name>
        <dbReference type="ChEBI" id="CHEBI:49883"/>
        <label>1</label>
    </ligand>
</feature>
<feature type="binding site" evidence="1">
    <location>
        <position position="42"/>
    </location>
    <ligand>
        <name>[4Fe-4S] cluster</name>
        <dbReference type="ChEBI" id="CHEBI:49883"/>
        <label>1</label>
    </ligand>
</feature>
<feature type="binding site" evidence="1">
    <location>
        <position position="48"/>
    </location>
    <ligand>
        <name>[4Fe-4S] cluster</name>
        <dbReference type="ChEBI" id="CHEBI:49883"/>
        <label>1</label>
    </ligand>
</feature>
<feature type="binding site" evidence="1">
    <location>
        <position position="63"/>
    </location>
    <ligand>
        <name>[4Fe-4S] cluster</name>
        <dbReference type="ChEBI" id="CHEBI:49883"/>
        <label>2</label>
        <note>4Fe-4S-S-AdoMet</note>
    </ligand>
</feature>
<feature type="binding site" evidence="1">
    <location>
        <position position="67"/>
    </location>
    <ligand>
        <name>[4Fe-4S] cluster</name>
        <dbReference type="ChEBI" id="CHEBI:49883"/>
        <label>2</label>
        <note>4Fe-4S-S-AdoMet</note>
    </ligand>
</feature>
<feature type="binding site" evidence="1">
    <location>
        <position position="70"/>
    </location>
    <ligand>
        <name>[4Fe-4S] cluster</name>
        <dbReference type="ChEBI" id="CHEBI:49883"/>
        <label>2</label>
        <note>4Fe-4S-S-AdoMet</note>
    </ligand>
</feature>
<feature type="binding site" evidence="1">
    <location>
        <position position="276"/>
    </location>
    <ligand>
        <name>[4Fe-4S] cluster</name>
        <dbReference type="ChEBI" id="CHEBI:49883"/>
        <label>1</label>
    </ligand>
</feature>
<keyword id="KW-0004">4Fe-4S</keyword>
<keyword id="KW-0963">Cytoplasm</keyword>
<keyword id="KW-0408">Iron</keyword>
<keyword id="KW-0411">Iron-sulfur</keyword>
<keyword id="KW-0479">Metal-binding</keyword>
<keyword id="KW-0949">S-adenosyl-L-methionine</keyword>
<keyword id="KW-0808">Transferase</keyword>